<comment type="function">
    <text evidence="1">Modulates RecA activity.</text>
</comment>
<comment type="subcellular location">
    <subcellularLocation>
        <location evidence="1">Cytoplasm</location>
    </subcellularLocation>
</comment>
<comment type="similarity">
    <text evidence="1">Belongs to the RecX family.</text>
</comment>
<keyword id="KW-0963">Cytoplasm</keyword>
<dbReference type="EMBL" id="CP000261">
    <property type="protein sequence ID" value="ABF36393.1"/>
    <property type="molecule type" value="Genomic_DNA"/>
</dbReference>
<dbReference type="SMR" id="Q1JAL5"/>
<dbReference type="KEGG" id="spj:MGAS2096_Spy1341"/>
<dbReference type="HOGENOM" id="CLU_066607_4_0_9"/>
<dbReference type="GO" id="GO:0005737">
    <property type="term" value="C:cytoplasm"/>
    <property type="evidence" value="ECO:0007669"/>
    <property type="project" value="UniProtKB-SubCell"/>
</dbReference>
<dbReference type="GO" id="GO:0006282">
    <property type="term" value="P:regulation of DNA repair"/>
    <property type="evidence" value="ECO:0007669"/>
    <property type="project" value="UniProtKB-UniRule"/>
</dbReference>
<dbReference type="Gene3D" id="1.10.10.10">
    <property type="entry name" value="Winged helix-like DNA-binding domain superfamily/Winged helix DNA-binding domain"/>
    <property type="match status" value="4"/>
</dbReference>
<dbReference type="HAMAP" id="MF_01114">
    <property type="entry name" value="RecX"/>
    <property type="match status" value="1"/>
</dbReference>
<dbReference type="InterPro" id="IPR053926">
    <property type="entry name" value="RecX_HTH_1st"/>
</dbReference>
<dbReference type="InterPro" id="IPR053924">
    <property type="entry name" value="RecX_HTH_2nd"/>
</dbReference>
<dbReference type="InterPro" id="IPR053925">
    <property type="entry name" value="RecX_HTH_3rd"/>
</dbReference>
<dbReference type="InterPro" id="IPR003783">
    <property type="entry name" value="Regulatory_RecX"/>
</dbReference>
<dbReference type="InterPro" id="IPR036388">
    <property type="entry name" value="WH-like_DNA-bd_sf"/>
</dbReference>
<dbReference type="NCBIfam" id="NF010733">
    <property type="entry name" value="PRK14135.1"/>
    <property type="match status" value="1"/>
</dbReference>
<dbReference type="PANTHER" id="PTHR33602">
    <property type="entry name" value="REGULATORY PROTEIN RECX FAMILY PROTEIN"/>
    <property type="match status" value="1"/>
</dbReference>
<dbReference type="PANTHER" id="PTHR33602:SF1">
    <property type="entry name" value="REGULATORY PROTEIN RECX FAMILY PROTEIN"/>
    <property type="match status" value="1"/>
</dbReference>
<dbReference type="Pfam" id="PF21982">
    <property type="entry name" value="RecX_HTH1"/>
    <property type="match status" value="1"/>
</dbReference>
<dbReference type="Pfam" id="PF02631">
    <property type="entry name" value="RecX_HTH2"/>
    <property type="match status" value="1"/>
</dbReference>
<dbReference type="Pfam" id="PF21981">
    <property type="entry name" value="RecX_HTH3"/>
    <property type="match status" value="2"/>
</dbReference>
<sequence>MKITKIEKKKRLYLIELDNDESLYVTEDTIVRFMLSKDKVLDNDQLEDMKHFAQLSYGKNLALYFLSFQQRSNKQVADYLRKHEIEEHIIPDIITQLQEEQWIDDTKLADTYIRQNQLNGDKGPQVLKQKLLQKGIASHDIDPILSQTDFSQLAQKVSQKLFDKYQEKLPPKALKDKITQALLTKGFSYDLAKHSLNHLNFDQDNQEIENLLDKELDKQYRKLSRKYDGYTLKQKLYQALYRKGYNSDDINCKLRNYL</sequence>
<feature type="chain" id="PRO_1000065216" description="Regulatory protein RecX">
    <location>
        <begin position="1"/>
        <end position="258"/>
    </location>
</feature>
<organism>
    <name type="scientific">Streptococcus pyogenes serotype M12 (strain MGAS2096)</name>
    <dbReference type="NCBI Taxonomy" id="370553"/>
    <lineage>
        <taxon>Bacteria</taxon>
        <taxon>Bacillati</taxon>
        <taxon>Bacillota</taxon>
        <taxon>Bacilli</taxon>
        <taxon>Lactobacillales</taxon>
        <taxon>Streptococcaceae</taxon>
        <taxon>Streptococcus</taxon>
    </lineage>
</organism>
<reference key="1">
    <citation type="journal article" date="2006" name="Proc. Natl. Acad. Sci. U.S.A.">
        <title>Molecular genetic anatomy of inter- and intraserotype variation in the human bacterial pathogen group A Streptococcus.</title>
        <authorList>
            <person name="Beres S.B."/>
            <person name="Richter E.W."/>
            <person name="Nagiec M.J."/>
            <person name="Sumby P."/>
            <person name="Porcella S.F."/>
            <person name="DeLeo F.R."/>
            <person name="Musser J.M."/>
        </authorList>
    </citation>
    <scope>NUCLEOTIDE SEQUENCE [LARGE SCALE GENOMIC DNA]</scope>
    <source>
        <strain>MGAS2096</strain>
    </source>
</reference>
<evidence type="ECO:0000255" key="1">
    <source>
        <dbReference type="HAMAP-Rule" id="MF_01114"/>
    </source>
</evidence>
<accession>Q1JAL5</accession>
<name>RECX_STRPB</name>
<proteinExistence type="inferred from homology"/>
<protein>
    <recommendedName>
        <fullName evidence="1">Regulatory protein RecX</fullName>
    </recommendedName>
</protein>
<gene>
    <name evidence="1" type="primary">recX</name>
    <name type="ordered locus">MGAS2096_Spy1341</name>
</gene>